<protein>
    <recommendedName>
        <fullName evidence="17">Kin of IRRE-like protein 3</fullName>
    </recommendedName>
    <alternativeName>
        <fullName>Kin of irregular chiasm-like protein 3</fullName>
    </alternativeName>
    <alternativeName>
        <fullName evidence="16">Nephrin-like protein 2</fullName>
    </alternativeName>
    <alternativeName>
        <fullName evidence="13">mKirre</fullName>
    </alternativeName>
    <component>
        <recommendedName>
            <fullName>Processed kin of IRRE-like protein 3</fullName>
        </recommendedName>
    </component>
</protein>
<accession>Q8BR86</accession>
<accession>Q6P555</accession>
<accession>Q810H3</accession>
<accession>Q8BGQ5</accession>
<accession>Q8BRS8</accession>
<dbReference type="EMBL" id="AY169782">
    <property type="protein sequence ID" value="AAO41835.1"/>
    <property type="molecule type" value="mRNA"/>
</dbReference>
<dbReference type="EMBL" id="AK034142">
    <property type="protein sequence ID" value="BAC28604.1"/>
    <property type="molecule type" value="mRNA"/>
</dbReference>
<dbReference type="EMBL" id="AK038385">
    <property type="protein sequence ID" value="BAC29980.1"/>
    <property type="molecule type" value="mRNA"/>
</dbReference>
<dbReference type="EMBL" id="AK043580">
    <property type="protein sequence ID" value="BAC31587.1"/>
    <property type="molecule type" value="mRNA"/>
</dbReference>
<dbReference type="EMBL" id="AK045373">
    <property type="protein sequence ID" value="BAC32333.1"/>
    <property type="molecule type" value="mRNA"/>
</dbReference>
<dbReference type="EMBL" id="BC063072">
    <property type="protein sequence ID" value="AAH63072.1"/>
    <property type="molecule type" value="mRNA"/>
</dbReference>
<dbReference type="CCDS" id="CCDS40574.1">
    <molecule id="Q8BR86-4"/>
</dbReference>
<dbReference type="CCDS" id="CCDS80973.1">
    <molecule id="Q8BR86-2"/>
</dbReference>
<dbReference type="RefSeq" id="NP_001177840.1">
    <molecule id="Q8BR86-1"/>
    <property type="nucleotide sequence ID" value="NM_001190911.2"/>
</dbReference>
<dbReference type="RefSeq" id="NP_001177841.1">
    <molecule id="Q8BR86-2"/>
    <property type="nucleotide sequence ID" value="NM_001190912.2"/>
</dbReference>
<dbReference type="RefSeq" id="NP_001177842.1">
    <molecule id="Q8BR86-3"/>
    <property type="nucleotide sequence ID" value="NM_001190913.2"/>
</dbReference>
<dbReference type="RefSeq" id="NP_080600.1">
    <molecule id="Q8BR86-4"/>
    <property type="nucleotide sequence ID" value="NM_026324.4"/>
</dbReference>
<dbReference type="RefSeq" id="XP_006510623.1">
    <molecule id="Q8BR86-1"/>
    <property type="nucleotide sequence ID" value="XM_006510560.5"/>
</dbReference>
<dbReference type="RefSeq" id="XP_006510624.1">
    <molecule id="Q8BR86-2"/>
    <property type="nucleotide sequence ID" value="XM_006510561.5"/>
</dbReference>
<dbReference type="RefSeq" id="XP_006510626.1">
    <molecule id="Q8BR86-4"/>
    <property type="nucleotide sequence ID" value="XM_006510563.5"/>
</dbReference>
<dbReference type="RefSeq" id="XP_036011098.1">
    <molecule id="Q8BR86-1"/>
    <property type="nucleotide sequence ID" value="XM_036155205.1"/>
</dbReference>
<dbReference type="PDB" id="7LU6">
    <property type="method" value="X-ray"/>
    <property type="resolution" value="1.95 A"/>
    <property type="chains" value="A/B/C/D/E/F/G/H=47-146"/>
</dbReference>
<dbReference type="PDBsum" id="7LU6"/>
<dbReference type="SASBDB" id="Q8BR86"/>
<dbReference type="SMR" id="Q8BR86"/>
<dbReference type="BioGRID" id="212378">
    <property type="interactions" value="3"/>
</dbReference>
<dbReference type="FunCoup" id="Q8BR86">
    <property type="interactions" value="589"/>
</dbReference>
<dbReference type="STRING" id="10090.ENSMUSP00000140219"/>
<dbReference type="GlyConnect" id="2452">
    <property type="glycosylation" value="1 N-Linked glycan (1 site)"/>
</dbReference>
<dbReference type="GlyCosmos" id="Q8BR86">
    <property type="glycosylation" value="4 sites, 1 glycan"/>
</dbReference>
<dbReference type="GlyGen" id="Q8BR86">
    <property type="glycosylation" value="4 sites, 3 N-linked glycans (2 sites)"/>
</dbReference>
<dbReference type="iPTMnet" id="Q8BR86"/>
<dbReference type="PhosphoSitePlus" id="Q8BR86"/>
<dbReference type="PaxDb" id="10090-ENSMUSP00000140219"/>
<dbReference type="ProteomicsDB" id="263546">
    <molecule id="Q8BR86-1"/>
</dbReference>
<dbReference type="ProteomicsDB" id="263547">
    <molecule id="Q8BR86-2"/>
</dbReference>
<dbReference type="ProteomicsDB" id="263548">
    <molecule id="Q8BR86-3"/>
</dbReference>
<dbReference type="ProteomicsDB" id="263549">
    <molecule id="Q8BR86-4"/>
</dbReference>
<dbReference type="ABCD" id="Q8BR86">
    <property type="antibodies" value="2 sequenced antibodies"/>
</dbReference>
<dbReference type="Antibodypedia" id="33010">
    <property type="antibodies" value="136 antibodies from 30 providers"/>
</dbReference>
<dbReference type="DNASU" id="67703"/>
<dbReference type="Ensembl" id="ENSMUST00000115148.9">
    <molecule id="Q8BR86-4"/>
    <property type="protein sequence ID" value="ENSMUSP00000110801.3"/>
    <property type="gene ID" value="ENSMUSG00000032036.16"/>
</dbReference>
<dbReference type="Ensembl" id="ENSMUST00000187182.7">
    <molecule id="Q8BR86-2"/>
    <property type="protein sequence ID" value="ENSMUSP00000140219.2"/>
    <property type="gene ID" value="ENSMUSG00000032036.16"/>
</dbReference>
<dbReference type="GeneID" id="67703"/>
<dbReference type="KEGG" id="mmu:67703"/>
<dbReference type="UCSC" id="uc009osg.1">
    <molecule id="Q8BR86-3"/>
    <property type="organism name" value="mouse"/>
</dbReference>
<dbReference type="UCSC" id="uc009osh.2">
    <molecule id="Q8BR86-4"/>
    <property type="organism name" value="mouse"/>
</dbReference>
<dbReference type="UCSC" id="uc009osi.2">
    <molecule id="Q8BR86-1"/>
    <property type="organism name" value="mouse"/>
</dbReference>
<dbReference type="UCSC" id="uc009osj.2">
    <molecule id="Q8BR86-2"/>
    <property type="organism name" value="mouse"/>
</dbReference>
<dbReference type="AGR" id="MGI:1914953"/>
<dbReference type="CTD" id="84623"/>
<dbReference type="MGI" id="MGI:1914953">
    <property type="gene designation" value="Kirrel3"/>
</dbReference>
<dbReference type="VEuPathDB" id="HostDB:ENSMUSG00000032036"/>
<dbReference type="eggNOG" id="KOG3510">
    <property type="taxonomic scope" value="Eukaryota"/>
</dbReference>
<dbReference type="GeneTree" id="ENSGT00940000157126"/>
<dbReference type="InParanoid" id="Q8BR86"/>
<dbReference type="OMA" id="EDHMASI"/>
<dbReference type="PhylomeDB" id="Q8BR86"/>
<dbReference type="TreeFam" id="TF327139"/>
<dbReference type="Reactome" id="R-MMU-373753">
    <property type="pathway name" value="Nephrin family interactions"/>
</dbReference>
<dbReference type="BioGRID-ORCS" id="67703">
    <property type="hits" value="0 hits in 76 CRISPR screens"/>
</dbReference>
<dbReference type="ChiTaRS" id="Kirrel3">
    <property type="organism name" value="mouse"/>
</dbReference>
<dbReference type="PRO" id="PR:Q8BR86"/>
<dbReference type="Proteomes" id="UP000000589">
    <property type="component" value="Chromosome 9"/>
</dbReference>
<dbReference type="RNAct" id="Q8BR86">
    <property type="molecule type" value="protein"/>
</dbReference>
<dbReference type="Bgee" id="ENSMUSG00000032036">
    <property type="expression patterns" value="Expressed in cortical plate and 153 other cell types or tissues"/>
</dbReference>
<dbReference type="ExpressionAtlas" id="Q8BR86">
    <property type="expression patterns" value="baseline and differential"/>
</dbReference>
<dbReference type="GO" id="GO:0030424">
    <property type="term" value="C:axon"/>
    <property type="evidence" value="ECO:0000314"/>
    <property type="project" value="UniProtKB"/>
</dbReference>
<dbReference type="GO" id="GO:0030425">
    <property type="term" value="C:dendrite"/>
    <property type="evidence" value="ECO:0000314"/>
    <property type="project" value="UniProtKB"/>
</dbReference>
<dbReference type="GO" id="GO:0043198">
    <property type="term" value="C:dendritic shaft"/>
    <property type="evidence" value="ECO:0000314"/>
    <property type="project" value="MGI"/>
</dbReference>
<dbReference type="GO" id="GO:0005576">
    <property type="term" value="C:extracellular region"/>
    <property type="evidence" value="ECO:0000314"/>
    <property type="project" value="UniProtKB"/>
</dbReference>
<dbReference type="GO" id="GO:0016020">
    <property type="term" value="C:membrane"/>
    <property type="evidence" value="ECO:0000314"/>
    <property type="project" value="UniProtKB"/>
</dbReference>
<dbReference type="GO" id="GO:0005886">
    <property type="term" value="C:plasma membrane"/>
    <property type="evidence" value="ECO:0000314"/>
    <property type="project" value="MGI"/>
</dbReference>
<dbReference type="GO" id="GO:0008021">
    <property type="term" value="C:synaptic vesicle"/>
    <property type="evidence" value="ECO:0007669"/>
    <property type="project" value="Ensembl"/>
</dbReference>
<dbReference type="GO" id="GO:0030165">
    <property type="term" value="F:PDZ domain binding"/>
    <property type="evidence" value="ECO:0000303"/>
    <property type="project" value="UniProtKB"/>
</dbReference>
<dbReference type="GO" id="GO:0072102">
    <property type="term" value="P:glomerulus morphogenesis"/>
    <property type="evidence" value="ECO:0000315"/>
    <property type="project" value="MGI"/>
</dbReference>
<dbReference type="GO" id="GO:0030097">
    <property type="term" value="P:hemopoiesis"/>
    <property type="evidence" value="ECO:0000314"/>
    <property type="project" value="UniProtKB"/>
</dbReference>
<dbReference type="GO" id="GO:0021766">
    <property type="term" value="P:hippocampus development"/>
    <property type="evidence" value="ECO:0000315"/>
    <property type="project" value="UniProtKB"/>
</dbReference>
<dbReference type="GO" id="GO:0007156">
    <property type="term" value="P:homophilic cell adhesion via plasma membrane adhesion molecules"/>
    <property type="evidence" value="ECO:0000314"/>
    <property type="project" value="UniProtKB"/>
</dbReference>
<dbReference type="GO" id="GO:0002121">
    <property type="term" value="P:inter-male aggressive behavior"/>
    <property type="evidence" value="ECO:0000315"/>
    <property type="project" value="MGI"/>
</dbReference>
<dbReference type="GO" id="GO:0001764">
    <property type="term" value="P:neuron migration"/>
    <property type="evidence" value="ECO:0000315"/>
    <property type="project" value="MGI"/>
</dbReference>
<dbReference type="GO" id="GO:0048812">
    <property type="term" value="P:neuron projection morphogenesis"/>
    <property type="evidence" value="ECO:0000315"/>
    <property type="project" value="MGI"/>
</dbReference>
<dbReference type="GO" id="GO:0021740">
    <property type="term" value="P:principal sensory nucleus of trigeminal nerve development"/>
    <property type="evidence" value="ECO:0000315"/>
    <property type="project" value="MGI"/>
</dbReference>
<dbReference type="GO" id="GO:0007416">
    <property type="term" value="P:synapse assembly"/>
    <property type="evidence" value="ECO:0000314"/>
    <property type="project" value="UniProtKB"/>
</dbReference>
<dbReference type="CDD" id="cd05759">
    <property type="entry name" value="IgI_2_KIRREL3-like"/>
    <property type="match status" value="1"/>
</dbReference>
<dbReference type="CDD" id="cd05898">
    <property type="entry name" value="IgI_5_KIRREL3"/>
    <property type="match status" value="1"/>
</dbReference>
<dbReference type="FunFam" id="2.60.40.10:FF:000077">
    <property type="entry name" value="Kirre like nephrin family adhesion molecule 3"/>
    <property type="match status" value="1"/>
</dbReference>
<dbReference type="FunFam" id="2.60.40.10:FF:000094">
    <property type="entry name" value="Kirre like nephrin family adhesion molecule 3"/>
    <property type="match status" value="1"/>
</dbReference>
<dbReference type="FunFam" id="2.60.40.10:FF:000103">
    <property type="entry name" value="Kirre like nephrin family adhesion molecule 3"/>
    <property type="match status" value="1"/>
</dbReference>
<dbReference type="FunFam" id="2.60.40.10:FF:000170">
    <property type="entry name" value="Kirre like nephrin family adhesion molecule 3"/>
    <property type="match status" value="1"/>
</dbReference>
<dbReference type="Gene3D" id="2.60.40.10">
    <property type="entry name" value="Immunoglobulins"/>
    <property type="match status" value="5"/>
</dbReference>
<dbReference type="InterPro" id="IPR013162">
    <property type="entry name" value="CD80_C2-set"/>
</dbReference>
<dbReference type="InterPro" id="IPR051275">
    <property type="entry name" value="Cell_adhesion_signaling"/>
</dbReference>
<dbReference type="InterPro" id="IPR007110">
    <property type="entry name" value="Ig-like_dom"/>
</dbReference>
<dbReference type="InterPro" id="IPR036179">
    <property type="entry name" value="Ig-like_dom_sf"/>
</dbReference>
<dbReference type="InterPro" id="IPR013783">
    <property type="entry name" value="Ig-like_fold"/>
</dbReference>
<dbReference type="InterPro" id="IPR013098">
    <property type="entry name" value="Ig_I-set"/>
</dbReference>
<dbReference type="InterPro" id="IPR003599">
    <property type="entry name" value="Ig_sub"/>
</dbReference>
<dbReference type="InterPro" id="IPR003598">
    <property type="entry name" value="Ig_sub2"/>
</dbReference>
<dbReference type="PANTHER" id="PTHR11640:SF49">
    <property type="entry name" value="KIN OF IRRE-LIKE PROTEIN 3"/>
    <property type="match status" value="1"/>
</dbReference>
<dbReference type="PANTHER" id="PTHR11640">
    <property type="entry name" value="NEPHRIN"/>
    <property type="match status" value="1"/>
</dbReference>
<dbReference type="Pfam" id="PF08205">
    <property type="entry name" value="C2-set_2"/>
    <property type="match status" value="1"/>
</dbReference>
<dbReference type="Pfam" id="PF07679">
    <property type="entry name" value="I-set"/>
    <property type="match status" value="2"/>
</dbReference>
<dbReference type="Pfam" id="PF13927">
    <property type="entry name" value="Ig_3"/>
    <property type="match status" value="1"/>
</dbReference>
<dbReference type="SMART" id="SM00409">
    <property type="entry name" value="IG"/>
    <property type="match status" value="4"/>
</dbReference>
<dbReference type="SMART" id="SM00408">
    <property type="entry name" value="IGc2"/>
    <property type="match status" value="3"/>
</dbReference>
<dbReference type="SUPFAM" id="SSF48726">
    <property type="entry name" value="Immunoglobulin"/>
    <property type="match status" value="5"/>
</dbReference>
<dbReference type="PROSITE" id="PS50835">
    <property type="entry name" value="IG_LIKE"/>
    <property type="match status" value="5"/>
</dbReference>
<name>KIRR3_MOUSE</name>
<evidence type="ECO:0000250" key="1">
    <source>
        <dbReference type="UniProtKB" id="Q8IZU9"/>
    </source>
</evidence>
<evidence type="ECO:0000255" key="2"/>
<evidence type="ECO:0000255" key="3">
    <source>
        <dbReference type="PROSITE-ProRule" id="PRU00114"/>
    </source>
</evidence>
<evidence type="ECO:0000256" key="4">
    <source>
        <dbReference type="SAM" id="MobiDB-lite"/>
    </source>
</evidence>
<evidence type="ECO:0000269" key="5">
    <source>
    </source>
</evidence>
<evidence type="ECO:0000269" key="6">
    <source>
    </source>
</evidence>
<evidence type="ECO:0000269" key="7">
    <source>
    </source>
</evidence>
<evidence type="ECO:0000269" key="8">
    <source>
    </source>
</evidence>
<evidence type="ECO:0000269" key="9">
    <source>
    </source>
</evidence>
<evidence type="ECO:0000269" key="10">
    <source>
    </source>
</evidence>
<evidence type="ECO:0000269" key="11">
    <source>
    </source>
</evidence>
<evidence type="ECO:0000269" key="12">
    <source>
    </source>
</evidence>
<evidence type="ECO:0000303" key="13">
    <source>
    </source>
</evidence>
<evidence type="ECO:0000303" key="14">
    <source>
    </source>
</evidence>
<evidence type="ECO:0000303" key="15">
    <source>
    </source>
</evidence>
<evidence type="ECO:0000303" key="16">
    <source>
    </source>
</evidence>
<evidence type="ECO:0000305" key="17"/>
<evidence type="ECO:0000305" key="18">
    <source>
    </source>
</evidence>
<evidence type="ECO:0007829" key="19">
    <source>
        <dbReference type="PDB" id="7LU6"/>
    </source>
</evidence>
<reference key="1">
    <citation type="journal article" date="2003" name="Nat. Immunol.">
        <title>A stromal cell-derived membrane protein that supports hematopoietic stem cells.</title>
        <authorList>
            <person name="Ueno H."/>
            <person name="Sakita-Ishikawa M."/>
            <person name="Morikawa Y."/>
            <person name="Nakano T."/>
            <person name="Kitamura T."/>
            <person name="Saito M."/>
        </authorList>
    </citation>
    <scope>NUCLEOTIDE SEQUENCE [MRNA] (ISOFORM 4)</scope>
    <scope>PROTEIN CLEAVAGE</scope>
    <scope>FUNCTION</scope>
    <scope>SUBCELLULAR LOCATION</scope>
    <scope>TISSUE SPECIFICITY</scope>
</reference>
<reference key="2">
    <citation type="journal article" date="2005" name="Science">
        <title>The transcriptional landscape of the mammalian genome.</title>
        <authorList>
            <person name="Carninci P."/>
            <person name="Kasukawa T."/>
            <person name="Katayama S."/>
            <person name="Gough J."/>
            <person name="Frith M.C."/>
            <person name="Maeda N."/>
            <person name="Oyama R."/>
            <person name="Ravasi T."/>
            <person name="Lenhard B."/>
            <person name="Wells C."/>
            <person name="Kodzius R."/>
            <person name="Shimokawa K."/>
            <person name="Bajic V.B."/>
            <person name="Brenner S.E."/>
            <person name="Batalov S."/>
            <person name="Forrest A.R."/>
            <person name="Zavolan M."/>
            <person name="Davis M.J."/>
            <person name="Wilming L.G."/>
            <person name="Aidinis V."/>
            <person name="Allen J.E."/>
            <person name="Ambesi-Impiombato A."/>
            <person name="Apweiler R."/>
            <person name="Aturaliya R.N."/>
            <person name="Bailey T.L."/>
            <person name="Bansal M."/>
            <person name="Baxter L."/>
            <person name="Beisel K.W."/>
            <person name="Bersano T."/>
            <person name="Bono H."/>
            <person name="Chalk A.M."/>
            <person name="Chiu K.P."/>
            <person name="Choudhary V."/>
            <person name="Christoffels A."/>
            <person name="Clutterbuck D.R."/>
            <person name="Crowe M.L."/>
            <person name="Dalla E."/>
            <person name="Dalrymple B.P."/>
            <person name="de Bono B."/>
            <person name="Della Gatta G."/>
            <person name="di Bernardo D."/>
            <person name="Down T."/>
            <person name="Engstrom P."/>
            <person name="Fagiolini M."/>
            <person name="Faulkner G."/>
            <person name="Fletcher C.F."/>
            <person name="Fukushima T."/>
            <person name="Furuno M."/>
            <person name="Futaki S."/>
            <person name="Gariboldi M."/>
            <person name="Georgii-Hemming P."/>
            <person name="Gingeras T.R."/>
            <person name="Gojobori T."/>
            <person name="Green R.E."/>
            <person name="Gustincich S."/>
            <person name="Harbers M."/>
            <person name="Hayashi Y."/>
            <person name="Hensch T.K."/>
            <person name="Hirokawa N."/>
            <person name="Hill D."/>
            <person name="Huminiecki L."/>
            <person name="Iacono M."/>
            <person name="Ikeo K."/>
            <person name="Iwama A."/>
            <person name="Ishikawa T."/>
            <person name="Jakt M."/>
            <person name="Kanapin A."/>
            <person name="Katoh M."/>
            <person name="Kawasawa Y."/>
            <person name="Kelso J."/>
            <person name="Kitamura H."/>
            <person name="Kitano H."/>
            <person name="Kollias G."/>
            <person name="Krishnan S.P."/>
            <person name="Kruger A."/>
            <person name="Kummerfeld S.K."/>
            <person name="Kurochkin I.V."/>
            <person name="Lareau L.F."/>
            <person name="Lazarevic D."/>
            <person name="Lipovich L."/>
            <person name="Liu J."/>
            <person name="Liuni S."/>
            <person name="McWilliam S."/>
            <person name="Madan Babu M."/>
            <person name="Madera M."/>
            <person name="Marchionni L."/>
            <person name="Matsuda H."/>
            <person name="Matsuzawa S."/>
            <person name="Miki H."/>
            <person name="Mignone F."/>
            <person name="Miyake S."/>
            <person name="Morris K."/>
            <person name="Mottagui-Tabar S."/>
            <person name="Mulder N."/>
            <person name="Nakano N."/>
            <person name="Nakauchi H."/>
            <person name="Ng P."/>
            <person name="Nilsson R."/>
            <person name="Nishiguchi S."/>
            <person name="Nishikawa S."/>
            <person name="Nori F."/>
            <person name="Ohara O."/>
            <person name="Okazaki Y."/>
            <person name="Orlando V."/>
            <person name="Pang K.C."/>
            <person name="Pavan W.J."/>
            <person name="Pavesi G."/>
            <person name="Pesole G."/>
            <person name="Petrovsky N."/>
            <person name="Piazza S."/>
            <person name="Reed J."/>
            <person name="Reid J.F."/>
            <person name="Ring B.Z."/>
            <person name="Ringwald M."/>
            <person name="Rost B."/>
            <person name="Ruan Y."/>
            <person name="Salzberg S.L."/>
            <person name="Sandelin A."/>
            <person name="Schneider C."/>
            <person name="Schoenbach C."/>
            <person name="Sekiguchi K."/>
            <person name="Semple C.A."/>
            <person name="Seno S."/>
            <person name="Sessa L."/>
            <person name="Sheng Y."/>
            <person name="Shibata Y."/>
            <person name="Shimada H."/>
            <person name="Shimada K."/>
            <person name="Silva D."/>
            <person name="Sinclair B."/>
            <person name="Sperling S."/>
            <person name="Stupka E."/>
            <person name="Sugiura K."/>
            <person name="Sultana R."/>
            <person name="Takenaka Y."/>
            <person name="Taki K."/>
            <person name="Tammoja K."/>
            <person name="Tan S.L."/>
            <person name="Tang S."/>
            <person name="Taylor M.S."/>
            <person name="Tegner J."/>
            <person name="Teichmann S.A."/>
            <person name="Ueda H.R."/>
            <person name="van Nimwegen E."/>
            <person name="Verardo R."/>
            <person name="Wei C.L."/>
            <person name="Yagi K."/>
            <person name="Yamanishi H."/>
            <person name="Zabarovsky E."/>
            <person name="Zhu S."/>
            <person name="Zimmer A."/>
            <person name="Hide W."/>
            <person name="Bult C."/>
            <person name="Grimmond S.M."/>
            <person name="Teasdale R.D."/>
            <person name="Liu E.T."/>
            <person name="Brusic V."/>
            <person name="Quackenbush J."/>
            <person name="Wahlestedt C."/>
            <person name="Mattick J.S."/>
            <person name="Hume D.A."/>
            <person name="Kai C."/>
            <person name="Sasaki D."/>
            <person name="Tomaru Y."/>
            <person name="Fukuda S."/>
            <person name="Kanamori-Katayama M."/>
            <person name="Suzuki M."/>
            <person name="Aoki J."/>
            <person name="Arakawa T."/>
            <person name="Iida J."/>
            <person name="Imamura K."/>
            <person name="Itoh M."/>
            <person name="Kato T."/>
            <person name="Kawaji H."/>
            <person name="Kawagashira N."/>
            <person name="Kawashima T."/>
            <person name="Kojima M."/>
            <person name="Kondo S."/>
            <person name="Konno H."/>
            <person name="Nakano K."/>
            <person name="Ninomiya N."/>
            <person name="Nishio T."/>
            <person name="Okada M."/>
            <person name="Plessy C."/>
            <person name="Shibata K."/>
            <person name="Shiraki T."/>
            <person name="Suzuki S."/>
            <person name="Tagami M."/>
            <person name="Waki K."/>
            <person name="Watahiki A."/>
            <person name="Okamura-Oho Y."/>
            <person name="Suzuki H."/>
            <person name="Kawai J."/>
            <person name="Hayashizaki Y."/>
        </authorList>
    </citation>
    <scope>NUCLEOTIDE SEQUENCE [LARGE SCALE MRNA] (ISOFORMS 1 AND 3)</scope>
    <source>
        <strain>C57BL/6J</strain>
        <tissue>Brain cortex</tissue>
        <tissue>Corpora quadrigemina</tissue>
    </source>
</reference>
<reference key="3">
    <citation type="journal article" date="2004" name="Genome Res.">
        <title>The status, quality, and expansion of the NIH full-length cDNA project: the Mammalian Gene Collection (MGC).</title>
        <authorList>
            <consortium name="The MGC Project Team"/>
        </authorList>
    </citation>
    <scope>NUCLEOTIDE SEQUENCE [LARGE SCALE MRNA] (ISOFORM 2)</scope>
    <source>
        <strain>C57BL/6J</strain>
        <tissue>Brain</tissue>
    </source>
</reference>
<reference key="4">
    <citation type="journal article" date="2005" name="J. Am. Soc. Nephrol.">
        <title>NEPH2 is located at the glomerular slit diaphragm, interacts with nephrin and is cleaved from podocytes by metalloproteinases.</title>
        <authorList>
            <person name="Gerke P."/>
            <person name="Sellin L."/>
            <person name="Kretz O."/>
            <person name="Petraschka D."/>
            <person name="Zentgraf H."/>
            <person name="Benzing T."/>
            <person name="Walz G."/>
        </authorList>
    </citation>
    <scope>SUBUNIT</scope>
    <scope>INTERACTION WITH NPHS1</scope>
    <scope>PROTEIN CLEAVAGE</scope>
</reference>
<reference key="5">
    <citation type="journal article" date="2005" name="Neuroscience">
        <title>Expression of mKirre, a mammalian homolog of Drosophila kirre, in the developing and adult mouse brain.</title>
        <authorList>
            <person name="Tamura S."/>
            <person name="Morikawa Y."/>
            <person name="Hisaoka T."/>
            <person name="Ueno H."/>
            <person name="Kitamura T."/>
            <person name="Senba E."/>
        </authorList>
    </citation>
    <scope>TISSUE SPECIFICITY</scope>
    <scope>DEVELOPMENTAL STAGE</scope>
</reference>
<reference key="6">
    <citation type="journal article" date="2008" name="J. Comp. Neurol.">
        <title>Expression of kin of irregular chiasm-like 3/mKirre in proprioceptive neurons of the dorsal root ganglia and its interaction with nephrin in muscle spindles.</title>
        <authorList>
            <person name="Komori T."/>
            <person name="Gyobu H."/>
            <person name="Ueno H."/>
            <person name="Kitamura T."/>
            <person name="Senba E."/>
            <person name="Morikawa Y."/>
        </authorList>
    </citation>
    <scope>TISSUE SPECIFICITY</scope>
    <scope>INTERACTION WITH NPHS1</scope>
</reference>
<reference key="7">
    <citation type="journal article" date="2011" name="Mol. Cell. Neurosci.">
        <title>Role of Neph2 in pontine nuclei formation in the developing hindbrain.</title>
        <authorList>
            <person name="Nishida K."/>
            <person name="Nakayama K."/>
            <person name="Yoshimura S."/>
            <person name="Murakami F."/>
        </authorList>
    </citation>
    <scope>FUNCTION</scope>
</reference>
<reference key="8">
    <citation type="journal article" date="2013" name="Development">
        <title>Kirrel3 is required for the coalescence of vomeronasal sensory neuron axons into glomeruli and for male-male aggression.</title>
        <authorList>
            <person name="Prince J.E."/>
            <person name="Brignall A.C."/>
            <person name="Cutforth T."/>
            <person name="Shen K."/>
            <person name="Cloutier J.F."/>
        </authorList>
    </citation>
    <scope>FUNCTION</scope>
    <scope>TISSUE SPECIFICITY</scope>
    <scope>DISRUPTION PHENOTYPE</scope>
</reference>
<reference key="9">
    <citation type="journal article" date="2015" name="Elife">
        <title>The intellectual disability gene Kirrel3 regulates target-specific mossy fiber synapse development in the hippocampus.</title>
        <authorList>
            <person name="Martin E.A."/>
            <person name="Muralidhar S."/>
            <person name="Wang Z."/>
            <person name="Cervantes D.C."/>
            <person name="Basu R."/>
            <person name="Taylor M.R."/>
            <person name="Hunter J."/>
            <person name="Cutforth T."/>
            <person name="Wilke S.A."/>
            <person name="Ghosh A."/>
            <person name="Williams M.E."/>
        </authorList>
    </citation>
    <scope>FUNCTION</scope>
    <scope>SUBCELLULAR LOCATION</scope>
    <scope>SUBUNIT</scope>
    <scope>TISSUE SPECIFICITY</scope>
    <scope>DISRUPTION PHENOTYPE</scope>
</reference>
<reference key="10">
    <citation type="journal article" date="2015" name="Front. Cell. Neurosci.">
        <title>Mice lacking the synaptic adhesion molecule Neph2/Kirrel3 display moderate hyperactivity and defective novel object preference.</title>
        <authorList>
            <person name="Choi S.Y."/>
            <person name="Han K."/>
            <person name="Cutforth T."/>
            <person name="Chung W."/>
            <person name="Park H."/>
            <person name="Lee D."/>
            <person name="Kim R."/>
            <person name="Kim M.H."/>
            <person name="Choi Y."/>
            <person name="Shen K."/>
            <person name="Kim E."/>
        </authorList>
    </citation>
    <scope>TISSUE SPECIFICITY</scope>
    <scope>DISRUPTION PHENOTYPE</scope>
</reference>
<gene>
    <name type="primary">Kirrel3</name>
    <name type="synonym">Kiaa1867</name>
    <name evidence="16" type="synonym">Neph2</name>
</gene>
<feature type="signal peptide" evidence="2">
    <location>
        <begin position="1"/>
        <end position="21"/>
    </location>
</feature>
<feature type="chain" id="PRO_0000015099" description="Kin of IRRE-like protein 3">
    <location>
        <begin position="22"/>
        <end position="778"/>
    </location>
</feature>
<feature type="chain" id="PRO_0000296241" description="Processed kin of IRRE-like protein 3" evidence="18">
    <location>
        <begin position="22"/>
        <end status="unknown"/>
    </location>
</feature>
<feature type="topological domain" description="Extracellular" evidence="2">
    <location>
        <begin position="22"/>
        <end position="535"/>
    </location>
</feature>
<feature type="transmembrane region" description="Helical" evidence="2">
    <location>
        <begin position="536"/>
        <end position="556"/>
    </location>
</feature>
<feature type="topological domain" description="Cytoplasmic" evidence="2">
    <location>
        <begin position="557"/>
        <end position="778"/>
    </location>
</feature>
<feature type="domain" description="Ig-like C2-type 1">
    <location>
        <begin position="48"/>
        <end position="142"/>
    </location>
</feature>
<feature type="domain" description="Ig-like C2-type 2">
    <location>
        <begin position="147"/>
        <end position="243"/>
    </location>
</feature>
<feature type="domain" description="Ig-like C2-type 3">
    <location>
        <begin position="249"/>
        <end position="330"/>
    </location>
</feature>
<feature type="domain" description="Ig-like C2-type 4">
    <location>
        <begin position="335"/>
        <end position="415"/>
    </location>
</feature>
<feature type="domain" description="Ig-like C2-type 5">
    <location>
        <begin position="419"/>
        <end position="515"/>
    </location>
</feature>
<feature type="region of interest" description="Disordered" evidence="4">
    <location>
        <begin position="727"/>
        <end position="778"/>
    </location>
</feature>
<feature type="compositionally biased region" description="Polar residues" evidence="4">
    <location>
        <begin position="727"/>
        <end position="736"/>
    </location>
</feature>
<feature type="compositionally biased region" description="Low complexity" evidence="4">
    <location>
        <begin position="748"/>
        <end position="762"/>
    </location>
</feature>
<feature type="glycosylation site" description="N-linked (GlcNAc...) asparagine" evidence="2">
    <location>
        <position position="167"/>
    </location>
</feature>
<feature type="glycosylation site" description="N-linked (GlcNAc...) asparagine" evidence="2">
    <location>
        <position position="253"/>
    </location>
</feature>
<feature type="glycosylation site" description="N-linked (GlcNAc...) asparagine" evidence="2">
    <location>
        <position position="324"/>
    </location>
</feature>
<feature type="glycosylation site" description="N-linked (GlcNAc...) asparagine" evidence="2">
    <location>
        <position position="498"/>
    </location>
</feature>
<feature type="disulfide bond" evidence="3">
    <location>
        <begin position="69"/>
        <end position="127"/>
    </location>
</feature>
<feature type="disulfide bond" evidence="3">
    <location>
        <begin position="170"/>
        <end position="227"/>
    </location>
</feature>
<feature type="disulfide bond" evidence="3">
    <location>
        <begin position="271"/>
        <end position="314"/>
    </location>
</feature>
<feature type="disulfide bond" evidence="3">
    <location>
        <begin position="356"/>
        <end position="398"/>
    </location>
</feature>
<feature type="disulfide bond" evidence="3">
    <location>
        <begin position="440"/>
        <end position="499"/>
    </location>
</feature>
<feature type="splice variant" id="VSP_011816" description="In isoform 2." evidence="14">
    <location>
        <begin position="19"/>
        <end position="44"/>
    </location>
</feature>
<feature type="splice variant" id="VSP_011817" description="In isoform 3 and isoform 4." evidence="13 15">
    <location>
        <begin position="518"/>
        <end position="529"/>
    </location>
</feature>
<feature type="splice variant" id="VSP_011818" description="In isoform 2." evidence="14">
    <original>R</original>
    <variation>RSTGGRPGISGRGTEKKARLRLPRRA</variation>
    <location>
        <position position="565"/>
    </location>
</feature>
<feature type="splice variant" id="VSP_011819" description="In isoform 3." evidence="15">
    <original>MDRGEFQQDSVLKQLEVLKEEE</original>
    <variation>VRAQPMPHSILSTQTSRCSPYC</variation>
    <location>
        <begin position="603"/>
        <end position="624"/>
    </location>
</feature>
<feature type="splice variant" id="VSP_011820" description="In isoform 3." evidence="15">
    <location>
        <begin position="625"/>
        <end position="778"/>
    </location>
</feature>
<feature type="strand" evidence="19">
    <location>
        <begin position="57"/>
        <end position="60"/>
    </location>
</feature>
<feature type="strand" evidence="19">
    <location>
        <begin position="65"/>
        <end position="67"/>
    </location>
</feature>
<feature type="strand" evidence="19">
    <location>
        <begin position="78"/>
        <end position="82"/>
    </location>
</feature>
<feature type="strand" evidence="19">
    <location>
        <begin position="99"/>
        <end position="103"/>
    </location>
</feature>
<feature type="helix" evidence="19">
    <location>
        <begin position="105"/>
        <end position="107"/>
    </location>
</feature>
<feature type="strand" evidence="19">
    <location>
        <begin position="111"/>
        <end position="116"/>
    </location>
</feature>
<feature type="helix" evidence="19">
    <location>
        <begin position="119"/>
        <end position="121"/>
    </location>
</feature>
<feature type="strand" evidence="19">
    <location>
        <begin position="123"/>
        <end position="129"/>
    </location>
</feature>
<feature type="turn" evidence="19">
    <location>
        <begin position="130"/>
        <end position="133"/>
    </location>
</feature>
<feature type="strand" evidence="19">
    <location>
        <begin position="139"/>
        <end position="144"/>
    </location>
</feature>
<comment type="function">
    <text evidence="5 10 12">Synaptic adhesion molecule required for the formation of target-specific synapses (PubMed:23637329, PubMed:26575286). Required for formation of target-specific synapses at hippocampal mossy fiber synapses. Required for formation of mossy fiber filopodia, the synaptic structures connecting dentate granule and GABA neurons. Probably acts as a homophilic adhesion molecule that promotes trans-cellular interactions and stabilize mossy fiber filipodia contact and subsequent synapse formation (PubMed:26575286). Required for the coalescence of vomeronasal sensory neuron axons (PubMed:23637329). May be involved in the hematopoietic supportive capacity of stroma cells; the secreted extracellular domain is directly responsible for supporting hematopoietic stem cells (PubMed:12665856).</text>
</comment>
<comment type="subunit">
    <text evidence="1 6 8 12">Homodimer; mediates homophilic interactions to promote cell adhesion (PubMed:26575286). Interacts with NPHS1; forms heterodimers with NPHS1 (PubMed:15843475, PubMed:18752272). Interacts with NPHS2/podocin (via the C-terminus) (By similarity). Interacts with CASK. Interacts (via extracellular region) with MAP1B. Interacts (via extracellular region) with MYO16. Interacts (via intracellular region) with ATP1B1. Interacts (via intracellular region) with SHMT2. Interacts (via intracellular region) with UFC1 (By similarity).</text>
</comment>
<comment type="subcellular location">
    <subcellularLocation>
        <location evidence="5">Cell membrane</location>
        <topology evidence="5">Single-pass type I membrane protein</topology>
    </subcellularLocation>
    <subcellularLocation>
        <location evidence="12">Cell projection</location>
        <location evidence="12">Axon</location>
    </subcellularLocation>
    <subcellularLocation>
        <location evidence="12">Cell projection</location>
        <location evidence="12">Dendrite</location>
    </subcellularLocation>
</comment>
<comment type="subcellular location">
    <molecule>Processed kin of IRRE-like protein 3</molecule>
    <subcellularLocation>
        <location evidence="5">Secreted</location>
    </subcellularLocation>
</comment>
<comment type="alternative products">
    <event type="alternative splicing"/>
    <isoform>
        <id>Q8BR86-1</id>
        <name>1</name>
        <sequence type="displayed"/>
    </isoform>
    <isoform>
        <id>Q8BR86-2</id>
        <name>2</name>
        <sequence type="described" ref="VSP_011816 VSP_011818"/>
    </isoform>
    <isoform>
        <id>Q8BR86-3</id>
        <name>3</name>
        <sequence type="described" ref="VSP_011817 VSP_011819 VSP_011820"/>
    </isoform>
    <isoform>
        <id>Q8BR86-4</id>
        <name>4</name>
        <sequence type="described" ref="VSP_011817"/>
    </isoform>
</comment>
<comment type="tissue specificity">
    <text evidence="5 7 8 9 10 11 12">Expressed mainly in adult brain, bone marrow and stromal cells (PubMed:12665856). Expressed in diverse regions of the brain, including the cortex, hippocampus, striatum, olfactory bulb and cerebellum (PubMed:15908127, PubMed:26283919). In brain, expressed in pontine nucleus neurons (at protein level) (PubMed:21241806). In hippocampus, produced in both the dentate granule neurons and the GABAergic neurons, but not the CA3 neurons (PubMed:26575286). Expressed in subpopulations of vomeronasal sensory neurons (PubMed:23637329). Expressed in a subset of neurons in dorsal root ganglia (PubMed:18752272).</text>
</comment>
<comment type="developmental stage">
    <text evidence="7">At embryonic day 11.5, it is expressed in the differentiating zones of various regions, such as the caudate-putamen, the geniculate body, the thalamus, the amygdala and the brainstem. This expression persists in the adult, although expression is lower. After birth, highly expressed in the glomerular and mitral layers of the olfactory bulb, the cortical plate of the neocortex, the cochlear nucleus, and the molecular and granule cell layers of the cerebellum. In the hippocampus, expression is first observed in the dentate gyrus at postnatal day 7.</text>
</comment>
<comment type="PTM">
    <text evidence="5 6">Undergoes proteolysis by a metalloprotease and gives rise to a soluble form.</text>
</comment>
<comment type="disruption phenotype">
    <text evidence="10 11 12">Mice are viable and their size is normal. Mice show defects of the accessory olfactory system characterized by disorganization of the glomerular layer of the posterior accessory olfactory bulb and formation of fewer, larger glomeruli. Mice display a loss of male-male aggression in a resident-intruder assay (PubMed:23637329). Mice display moderate hyperactivity in a familiar, but not novel, environment and defective novel object recognition with normal performances in Morris water maze spatial learning and memory, contextual fear conditioning and extinction, and pattern separation tests (PubMed:26283919). Young mutant mice form fewer synapse-forming structures between dentate granule neurons and GABAergic neurons than normal mice, while the synapses that connect dentate granule neurons to CA3 neurons form normally. This may affect the balance of activity across the two types of dentate granule synapses and the CA3 neurons, leading to hyperactivity (PubMed:26575286).</text>
</comment>
<comment type="similarity">
    <text evidence="17">Belongs to the immunoglobulin superfamily.</text>
</comment>
<organism>
    <name type="scientific">Mus musculus</name>
    <name type="common">Mouse</name>
    <dbReference type="NCBI Taxonomy" id="10090"/>
    <lineage>
        <taxon>Eukaryota</taxon>
        <taxon>Metazoa</taxon>
        <taxon>Chordata</taxon>
        <taxon>Craniata</taxon>
        <taxon>Vertebrata</taxon>
        <taxon>Euteleostomi</taxon>
        <taxon>Mammalia</taxon>
        <taxon>Eutheria</taxon>
        <taxon>Euarchontoglires</taxon>
        <taxon>Glires</taxon>
        <taxon>Rodentia</taxon>
        <taxon>Myomorpha</taxon>
        <taxon>Muroidea</taxon>
        <taxon>Muridae</taxon>
        <taxon>Murinae</taxon>
        <taxon>Mus</taxon>
        <taxon>Mus</taxon>
    </lineage>
</organism>
<sequence length="778" mass="85405">MRPFQLDLLFLCFFLFSQELGLQKRGCCLVLGYMAKDKFRRMNEGQVYSFSQQPQDQVVVSGQPVTLLCAIPEYDGFVLWIKDGLALGVGRDLSSYPQYLVVGNHLSGEHHLKILRAELQDDAVYECQAIQAAIRSRPARLTVLVPPDDPIILGGPVISLRAGDPLNLTCHADNAKPAASIIWLRKGEVINGATYSKTLLRDGKRESIVSTLFISPGDVENGQSIVCRATNKAIPGGKETSVTIDIQHPPLVNLSVEPQPVLEDNIVTFHCSAKANPAVTQYRWAKRGHIIKEASGELYRTTVDYTYFSEPVSCEVTNALGSTNLSRTVDVYFGPRMTSEPQSLLVDLGSDAVFSCAWIGNPSLTIVWMKRGSGVVLSNEKTLTLKSVRQEDAGKYVCRAVVPRVGAGEREVTLTVNGPPIISSTQTQHALHGEKGQIKCFIRSTPPPDRIAWSWKENVLESGTSGRYTVETVNTEEGVISTLTISNIVRADFQTIYNCTAWNSFGSDTEIIRLKEQGSEMKSGAGLEAESVPMAVIIGVAVGAGVAFLVLMATIVAFCCARSQRNLKGVVSAKNDIRVEIVHKEPSSGREAEDHTTIKQLMMDRGEFQQDSVLKQLEVLKEEEKEFQNLKDPTNGYYSVNTFKEHHSTPTISLSSCQPDLRPTGKQRVPTGMSFTNIYSTLSGQGRLYDYGQRFVLGMGSSSIELCEREFQRGSLSDSSSFLDTQCDSSVSSSGKQDGYVQFDKASKASASSSHHSQSSSQNSDPSRPLQRRMQTHV</sequence>
<proteinExistence type="evidence at protein level"/>
<keyword id="KW-0002">3D-structure</keyword>
<keyword id="KW-0025">Alternative splicing</keyword>
<keyword id="KW-0130">Cell adhesion</keyword>
<keyword id="KW-1003">Cell membrane</keyword>
<keyword id="KW-0966">Cell projection</keyword>
<keyword id="KW-1015">Disulfide bond</keyword>
<keyword id="KW-0325">Glycoprotein</keyword>
<keyword id="KW-0393">Immunoglobulin domain</keyword>
<keyword id="KW-0472">Membrane</keyword>
<keyword id="KW-1185">Reference proteome</keyword>
<keyword id="KW-0677">Repeat</keyword>
<keyword id="KW-0964">Secreted</keyword>
<keyword id="KW-0732">Signal</keyword>
<keyword id="KW-0812">Transmembrane</keyword>
<keyword id="KW-1133">Transmembrane helix</keyword>